<protein>
    <recommendedName>
        <fullName evidence="1">23S rRNA (guanosine-2'-O-)-methyltransferase RlmB</fullName>
        <ecNumber evidence="1">2.1.1.185</ecNumber>
    </recommendedName>
    <alternativeName>
        <fullName evidence="1">23S rRNA (guanosine2251 2'-O)-methyltransferase</fullName>
    </alternativeName>
    <alternativeName>
        <fullName evidence="1">23S rRNA Gm2251 2'-O-methyltransferase</fullName>
    </alternativeName>
</protein>
<sequence length="243" mass="26557">MSEMIYGIHAVQALLERAPERFQEVFILKGREDKRLLPLIHALESQGVVIQLANRQYLDEKSDGAVHQGIIARVKPGRQYQENDLPDLIASLDQPFLLILDGVTDPHNLGACLRSADAAGVHAVIVPKDRSAQLNATAKKVACGAAESVPLIRVTNLARTMRMLQEENIWIVGTAGEADHTLYQSKMTGRLALVMGAEGEGMRRLTREHCDELISIPMAGSVSSLNVSVATGICLFEAVRQRS</sequence>
<dbReference type="EC" id="2.1.1.185" evidence="1"/>
<dbReference type="EMBL" id="AE014075">
    <property type="protein sequence ID" value="AAN83686.1"/>
    <property type="molecule type" value="Genomic_DNA"/>
</dbReference>
<dbReference type="RefSeq" id="WP_001293282.1">
    <property type="nucleotide sequence ID" value="NZ_CP051263.1"/>
</dbReference>
<dbReference type="SMR" id="P63178"/>
<dbReference type="STRING" id="199310.c5264"/>
<dbReference type="GeneID" id="93777641"/>
<dbReference type="KEGG" id="ecc:c5264"/>
<dbReference type="eggNOG" id="COG0566">
    <property type="taxonomic scope" value="Bacteria"/>
</dbReference>
<dbReference type="HOGENOM" id="CLU_021322_0_1_6"/>
<dbReference type="BioCyc" id="ECOL199310:C5264-MONOMER"/>
<dbReference type="Proteomes" id="UP000001410">
    <property type="component" value="Chromosome"/>
</dbReference>
<dbReference type="GO" id="GO:0005829">
    <property type="term" value="C:cytosol"/>
    <property type="evidence" value="ECO:0007669"/>
    <property type="project" value="TreeGrafter"/>
</dbReference>
<dbReference type="GO" id="GO:0003723">
    <property type="term" value="F:RNA binding"/>
    <property type="evidence" value="ECO:0007669"/>
    <property type="project" value="InterPro"/>
</dbReference>
<dbReference type="GO" id="GO:0070039">
    <property type="term" value="F:rRNA (guanosine-2'-O-)-methyltransferase activity"/>
    <property type="evidence" value="ECO:0007669"/>
    <property type="project" value="UniProtKB-UniRule"/>
</dbReference>
<dbReference type="CDD" id="cd18103">
    <property type="entry name" value="SpoU-like_RlmB"/>
    <property type="match status" value="1"/>
</dbReference>
<dbReference type="FunFam" id="3.40.1280.10:FF:000005">
    <property type="entry name" value="23S rRNA (guanosine-2'-O-)-methyltransferase RlmB"/>
    <property type="match status" value="1"/>
</dbReference>
<dbReference type="FunFam" id="3.30.1330.30:FF:000007">
    <property type="entry name" value="23S rRNA methyltransferase"/>
    <property type="match status" value="1"/>
</dbReference>
<dbReference type="Gene3D" id="3.30.1330.30">
    <property type="match status" value="1"/>
</dbReference>
<dbReference type="Gene3D" id="3.40.1280.10">
    <property type="match status" value="1"/>
</dbReference>
<dbReference type="HAMAP" id="MF_01887">
    <property type="entry name" value="23SrRNA_methyltr_B"/>
    <property type="match status" value="1"/>
</dbReference>
<dbReference type="InterPro" id="IPR024915">
    <property type="entry name" value="23S_rRNA_MeTrfase_RlmB"/>
</dbReference>
<dbReference type="InterPro" id="IPR029028">
    <property type="entry name" value="Alpha/beta_knot_MTases"/>
</dbReference>
<dbReference type="InterPro" id="IPR029064">
    <property type="entry name" value="Ribosomal_eL30-like_sf"/>
</dbReference>
<dbReference type="InterPro" id="IPR004441">
    <property type="entry name" value="rRNA_MeTrfase_TrmH"/>
</dbReference>
<dbReference type="InterPro" id="IPR001537">
    <property type="entry name" value="SpoU_MeTrfase"/>
</dbReference>
<dbReference type="InterPro" id="IPR013123">
    <property type="entry name" value="SpoU_subst-bd"/>
</dbReference>
<dbReference type="InterPro" id="IPR029026">
    <property type="entry name" value="tRNA_m1G_MTases_N"/>
</dbReference>
<dbReference type="NCBIfam" id="NF008386">
    <property type="entry name" value="PRK11181.1"/>
    <property type="match status" value="1"/>
</dbReference>
<dbReference type="NCBIfam" id="TIGR00186">
    <property type="entry name" value="rRNA_methyl_3"/>
    <property type="match status" value="1"/>
</dbReference>
<dbReference type="PANTHER" id="PTHR46429">
    <property type="entry name" value="23S RRNA (GUANOSINE-2'-O-)-METHYLTRANSFERASE RLMB"/>
    <property type="match status" value="1"/>
</dbReference>
<dbReference type="PANTHER" id="PTHR46429:SF1">
    <property type="entry name" value="23S RRNA (GUANOSINE-2'-O-)-METHYLTRANSFERASE RLMB"/>
    <property type="match status" value="1"/>
</dbReference>
<dbReference type="Pfam" id="PF00588">
    <property type="entry name" value="SpoU_methylase"/>
    <property type="match status" value="1"/>
</dbReference>
<dbReference type="Pfam" id="PF08032">
    <property type="entry name" value="SpoU_sub_bind"/>
    <property type="match status" value="1"/>
</dbReference>
<dbReference type="SMART" id="SM00967">
    <property type="entry name" value="SpoU_sub_bind"/>
    <property type="match status" value="1"/>
</dbReference>
<dbReference type="SUPFAM" id="SSF75217">
    <property type="entry name" value="alpha/beta knot"/>
    <property type="match status" value="1"/>
</dbReference>
<dbReference type="SUPFAM" id="SSF55315">
    <property type="entry name" value="L30e-like"/>
    <property type="match status" value="1"/>
</dbReference>
<keyword id="KW-0963">Cytoplasm</keyword>
<keyword id="KW-0489">Methyltransferase</keyword>
<keyword id="KW-1185">Reference proteome</keyword>
<keyword id="KW-0698">rRNA processing</keyword>
<keyword id="KW-0949">S-adenosyl-L-methionine</keyword>
<keyword id="KW-0808">Transferase</keyword>
<proteinExistence type="inferred from homology"/>
<comment type="function">
    <text evidence="1">Specifically methylates the ribose of guanosine 2251 in 23S rRNA.</text>
</comment>
<comment type="catalytic activity">
    <reaction evidence="1">
        <text>guanosine(2251) in 23S rRNA + S-adenosyl-L-methionine = 2'-O-methylguanosine(2251) in 23S rRNA + S-adenosyl-L-homocysteine + H(+)</text>
        <dbReference type="Rhea" id="RHEA:24140"/>
        <dbReference type="Rhea" id="RHEA-COMP:10239"/>
        <dbReference type="Rhea" id="RHEA-COMP:10241"/>
        <dbReference type="ChEBI" id="CHEBI:15378"/>
        <dbReference type="ChEBI" id="CHEBI:57856"/>
        <dbReference type="ChEBI" id="CHEBI:59789"/>
        <dbReference type="ChEBI" id="CHEBI:74269"/>
        <dbReference type="ChEBI" id="CHEBI:74445"/>
        <dbReference type="EC" id="2.1.1.185"/>
    </reaction>
</comment>
<comment type="subunit">
    <text evidence="1">Homodimer.</text>
</comment>
<comment type="subcellular location">
    <subcellularLocation>
        <location evidence="1">Cytoplasm</location>
    </subcellularLocation>
</comment>
<comment type="similarity">
    <text evidence="1">Belongs to the class IV-like SAM-binding methyltransferase superfamily. RNA methyltransferase TrmH family. RlmB subfamily.</text>
</comment>
<evidence type="ECO:0000255" key="1">
    <source>
        <dbReference type="HAMAP-Rule" id="MF_01887"/>
    </source>
</evidence>
<accession>P63178</accession>
<accession>P39290</accession>
<gene>
    <name evidence="1" type="primary">rlmB</name>
    <name type="ordered locus">c5264</name>
</gene>
<organism>
    <name type="scientific">Escherichia coli O6:H1 (strain CFT073 / ATCC 700928 / UPEC)</name>
    <dbReference type="NCBI Taxonomy" id="199310"/>
    <lineage>
        <taxon>Bacteria</taxon>
        <taxon>Pseudomonadati</taxon>
        <taxon>Pseudomonadota</taxon>
        <taxon>Gammaproteobacteria</taxon>
        <taxon>Enterobacterales</taxon>
        <taxon>Enterobacteriaceae</taxon>
        <taxon>Escherichia</taxon>
    </lineage>
</organism>
<reference key="1">
    <citation type="journal article" date="2002" name="Proc. Natl. Acad. Sci. U.S.A.">
        <title>Extensive mosaic structure revealed by the complete genome sequence of uropathogenic Escherichia coli.</title>
        <authorList>
            <person name="Welch R.A."/>
            <person name="Burland V."/>
            <person name="Plunkett G. III"/>
            <person name="Redford P."/>
            <person name="Roesch P."/>
            <person name="Rasko D."/>
            <person name="Buckles E.L."/>
            <person name="Liou S.-R."/>
            <person name="Boutin A."/>
            <person name="Hackett J."/>
            <person name="Stroud D."/>
            <person name="Mayhew G.F."/>
            <person name="Rose D.J."/>
            <person name="Zhou S."/>
            <person name="Schwartz D.C."/>
            <person name="Perna N.T."/>
            <person name="Mobley H.L.T."/>
            <person name="Donnenberg M.S."/>
            <person name="Blattner F.R."/>
        </authorList>
    </citation>
    <scope>NUCLEOTIDE SEQUENCE [LARGE SCALE GENOMIC DNA]</scope>
    <source>
        <strain>CFT073 / ATCC 700928 / UPEC</strain>
    </source>
</reference>
<name>RLMB_ECOL6</name>
<feature type="chain" id="PRO_0000159786" description="23S rRNA (guanosine-2'-O-)-methyltransferase RlmB">
    <location>
        <begin position="1"/>
        <end position="243"/>
    </location>
</feature>
<feature type="binding site" evidence="1">
    <location>
        <position position="196"/>
    </location>
    <ligand>
        <name>S-adenosyl-L-methionine</name>
        <dbReference type="ChEBI" id="CHEBI:59789"/>
    </ligand>
</feature>
<feature type="binding site" evidence="1">
    <location>
        <position position="216"/>
    </location>
    <ligand>
        <name>S-adenosyl-L-methionine</name>
        <dbReference type="ChEBI" id="CHEBI:59789"/>
    </ligand>
</feature>
<feature type="binding site" evidence="1">
    <location>
        <position position="225"/>
    </location>
    <ligand>
        <name>S-adenosyl-L-methionine</name>
        <dbReference type="ChEBI" id="CHEBI:59789"/>
    </ligand>
</feature>